<accession>A9H3R5</accession>
<accession>B5ZIG3</accession>
<evidence type="ECO:0000255" key="1">
    <source>
        <dbReference type="HAMAP-Rule" id="MF_01325"/>
    </source>
</evidence>
<evidence type="ECO:0000305" key="2"/>
<name>RL3_GLUDA</name>
<protein>
    <recommendedName>
        <fullName evidence="1">Large ribosomal subunit protein uL3</fullName>
    </recommendedName>
    <alternativeName>
        <fullName evidence="2">50S ribosomal protein L3</fullName>
    </alternativeName>
</protein>
<feature type="chain" id="PRO_1000086443" description="Large ribosomal subunit protein uL3">
    <location>
        <begin position="1"/>
        <end position="227"/>
    </location>
</feature>
<feature type="modified residue" description="N5-methylglutamine" evidence="1">
    <location>
        <position position="151"/>
    </location>
</feature>
<organism>
    <name type="scientific">Gluconacetobacter diazotrophicus (strain ATCC 49037 / DSM 5601 / CCUG 37298 / CIP 103539 / LMG 7603 / PAl5)</name>
    <dbReference type="NCBI Taxonomy" id="272568"/>
    <lineage>
        <taxon>Bacteria</taxon>
        <taxon>Pseudomonadati</taxon>
        <taxon>Pseudomonadota</taxon>
        <taxon>Alphaproteobacteria</taxon>
        <taxon>Acetobacterales</taxon>
        <taxon>Acetobacteraceae</taxon>
        <taxon>Gluconacetobacter</taxon>
    </lineage>
</organism>
<keyword id="KW-0488">Methylation</keyword>
<keyword id="KW-1185">Reference proteome</keyword>
<keyword id="KW-0687">Ribonucleoprotein</keyword>
<keyword id="KW-0689">Ribosomal protein</keyword>
<keyword id="KW-0694">RNA-binding</keyword>
<keyword id="KW-0699">rRNA-binding</keyword>
<reference key="1">
    <citation type="journal article" date="2009" name="BMC Genomics">
        <title>Complete genome sequence of the sugarcane nitrogen-fixing endophyte Gluconacetobacter diazotrophicus Pal5.</title>
        <authorList>
            <person name="Bertalan M."/>
            <person name="Albano R."/>
            <person name="de Padua V."/>
            <person name="Rouws L."/>
            <person name="Rojas C."/>
            <person name="Hemerly A."/>
            <person name="Teixeira K."/>
            <person name="Schwab S."/>
            <person name="Araujo J."/>
            <person name="Oliveira A."/>
            <person name="Franca L."/>
            <person name="Magalhaes V."/>
            <person name="Alqueres S."/>
            <person name="Cardoso A."/>
            <person name="Almeida W."/>
            <person name="Loureiro M.M."/>
            <person name="Nogueira E."/>
            <person name="Cidade D."/>
            <person name="Oliveira D."/>
            <person name="Simao T."/>
            <person name="Macedo J."/>
            <person name="Valadao A."/>
            <person name="Dreschsel M."/>
            <person name="Freitas F."/>
            <person name="Vidal M."/>
            <person name="Guedes H."/>
            <person name="Rodrigues E."/>
            <person name="Meneses C."/>
            <person name="Brioso P."/>
            <person name="Pozzer L."/>
            <person name="Figueiredo D."/>
            <person name="Montano H."/>
            <person name="Junior J."/>
            <person name="de Souza Filho G."/>
            <person name="Martin Quintana Flores V."/>
            <person name="Ferreira B."/>
            <person name="Branco A."/>
            <person name="Gonzalez P."/>
            <person name="Guillobel H."/>
            <person name="Lemos M."/>
            <person name="Seibel L."/>
            <person name="Macedo J."/>
            <person name="Alves-Ferreira M."/>
            <person name="Sachetto-Martins G."/>
            <person name="Coelho A."/>
            <person name="Santos E."/>
            <person name="Amaral G."/>
            <person name="Neves A."/>
            <person name="Pacheco A.B."/>
            <person name="Carvalho D."/>
            <person name="Lery L."/>
            <person name="Bisch P."/>
            <person name="Rossle S.C."/>
            <person name="Urmenyi T."/>
            <person name="Rael Pereira A."/>
            <person name="Silva R."/>
            <person name="Rondinelli E."/>
            <person name="von Kruger W."/>
            <person name="Martins O."/>
            <person name="Baldani J.I."/>
            <person name="Ferreira P.C."/>
        </authorList>
    </citation>
    <scope>NUCLEOTIDE SEQUENCE [LARGE SCALE GENOMIC DNA]</scope>
    <source>
        <strain>ATCC 49037 / DSM 5601 / CCUG 37298 / CIP 103539 / LMG 7603 / PAl5</strain>
    </source>
</reference>
<reference key="2">
    <citation type="journal article" date="2010" name="Stand. Genomic Sci.">
        <title>Two genome sequences of the same bacterial strain, Gluconacetobacter diazotrophicus PAl 5, suggest a new standard in genome sequence submission.</title>
        <authorList>
            <person name="Giongo A."/>
            <person name="Tyler H.L."/>
            <person name="Zipperer U.N."/>
            <person name="Triplett E.W."/>
        </authorList>
    </citation>
    <scope>NUCLEOTIDE SEQUENCE [LARGE SCALE GENOMIC DNA]</scope>
    <source>
        <strain>ATCC 49037 / DSM 5601 / CCUG 37298 / CIP 103539 / LMG 7603 / PAl5</strain>
    </source>
</reference>
<dbReference type="EMBL" id="AM889285">
    <property type="protein sequence ID" value="CAP57347.1"/>
    <property type="molecule type" value="Genomic_DNA"/>
</dbReference>
<dbReference type="EMBL" id="CP001189">
    <property type="protein sequence ID" value="ACI52696.1"/>
    <property type="molecule type" value="Genomic_DNA"/>
</dbReference>
<dbReference type="RefSeq" id="WP_012227958.1">
    <property type="nucleotide sequence ID" value="NC_010125.1"/>
</dbReference>
<dbReference type="SMR" id="A9H3R5"/>
<dbReference type="STRING" id="272568.GDI3404"/>
<dbReference type="KEGG" id="gdi:GDI3404"/>
<dbReference type="KEGG" id="gdj:Gdia_2966"/>
<dbReference type="eggNOG" id="COG0087">
    <property type="taxonomic scope" value="Bacteria"/>
</dbReference>
<dbReference type="HOGENOM" id="CLU_044142_2_0_5"/>
<dbReference type="OrthoDB" id="9806135at2"/>
<dbReference type="Proteomes" id="UP000001176">
    <property type="component" value="Chromosome"/>
</dbReference>
<dbReference type="GO" id="GO:0022625">
    <property type="term" value="C:cytosolic large ribosomal subunit"/>
    <property type="evidence" value="ECO:0007669"/>
    <property type="project" value="TreeGrafter"/>
</dbReference>
<dbReference type="GO" id="GO:0019843">
    <property type="term" value="F:rRNA binding"/>
    <property type="evidence" value="ECO:0007669"/>
    <property type="project" value="UniProtKB-UniRule"/>
</dbReference>
<dbReference type="GO" id="GO:0003735">
    <property type="term" value="F:structural constituent of ribosome"/>
    <property type="evidence" value="ECO:0007669"/>
    <property type="project" value="InterPro"/>
</dbReference>
<dbReference type="GO" id="GO:0006412">
    <property type="term" value="P:translation"/>
    <property type="evidence" value="ECO:0007669"/>
    <property type="project" value="UniProtKB-UniRule"/>
</dbReference>
<dbReference type="FunFam" id="2.40.30.10:FF:000004">
    <property type="entry name" value="50S ribosomal protein L3"/>
    <property type="match status" value="1"/>
</dbReference>
<dbReference type="FunFam" id="3.30.160.810:FF:000001">
    <property type="entry name" value="50S ribosomal protein L3"/>
    <property type="match status" value="1"/>
</dbReference>
<dbReference type="Gene3D" id="3.30.160.810">
    <property type="match status" value="1"/>
</dbReference>
<dbReference type="Gene3D" id="2.40.30.10">
    <property type="entry name" value="Translation factors"/>
    <property type="match status" value="1"/>
</dbReference>
<dbReference type="HAMAP" id="MF_01325_B">
    <property type="entry name" value="Ribosomal_uL3_B"/>
    <property type="match status" value="1"/>
</dbReference>
<dbReference type="InterPro" id="IPR000597">
    <property type="entry name" value="Ribosomal_uL3"/>
</dbReference>
<dbReference type="InterPro" id="IPR019927">
    <property type="entry name" value="Ribosomal_uL3_bac/org-type"/>
</dbReference>
<dbReference type="InterPro" id="IPR019926">
    <property type="entry name" value="Ribosomal_uL3_CS"/>
</dbReference>
<dbReference type="InterPro" id="IPR009000">
    <property type="entry name" value="Transl_B-barrel_sf"/>
</dbReference>
<dbReference type="NCBIfam" id="TIGR03625">
    <property type="entry name" value="L3_bact"/>
    <property type="match status" value="1"/>
</dbReference>
<dbReference type="PANTHER" id="PTHR11229">
    <property type="entry name" value="50S RIBOSOMAL PROTEIN L3"/>
    <property type="match status" value="1"/>
</dbReference>
<dbReference type="PANTHER" id="PTHR11229:SF16">
    <property type="entry name" value="LARGE RIBOSOMAL SUBUNIT PROTEIN UL3C"/>
    <property type="match status" value="1"/>
</dbReference>
<dbReference type="Pfam" id="PF00297">
    <property type="entry name" value="Ribosomal_L3"/>
    <property type="match status" value="1"/>
</dbReference>
<dbReference type="SUPFAM" id="SSF50447">
    <property type="entry name" value="Translation proteins"/>
    <property type="match status" value="1"/>
</dbReference>
<dbReference type="PROSITE" id="PS00474">
    <property type="entry name" value="RIBOSOMAL_L3"/>
    <property type="match status" value="1"/>
</dbReference>
<gene>
    <name evidence="1" type="primary">rplC</name>
    <name type="ordered locus">GDI3404</name>
    <name type="ordered locus">Gdia_2966</name>
</gene>
<comment type="function">
    <text evidence="1">One of the primary rRNA binding proteins, it binds directly near the 3'-end of the 23S rRNA, where it nucleates assembly of the 50S subunit.</text>
</comment>
<comment type="subunit">
    <text evidence="1">Part of the 50S ribosomal subunit. Forms a cluster with proteins L14 and L19.</text>
</comment>
<comment type="PTM">
    <text evidence="1">Methylated by PrmB.</text>
</comment>
<comment type="similarity">
    <text evidence="1">Belongs to the universal ribosomal protein uL3 family.</text>
</comment>
<proteinExistence type="inferred from homology"/>
<sequence>MRTGLIAKKLGMTRLFKEDGTHVPVTVLHVDNLQVVDVRTQDRDGYTAVQLGFGNAKVKNVSKPNRGHFARVKVEPKKKLAEFRVADDAVLEAGATLSAAHFVVGQKVDVTSTSKGKGFAGAMKRWNFAGLEASHGVSISHRSHGSTGNRQDPGKTFKNKKMAGHLGSERVTTLNLEVAAVDAEKNLLMVRGSVPGGKNELVLVRDAIKKARHAEAPYPAALVAAAG</sequence>